<gene>
    <name type="primary">LAMTOR3</name>
</gene>
<protein>
    <recommendedName>
        <fullName>Ragulator complex protein LAMTOR3</fullName>
    </recommendedName>
    <alternativeName>
        <fullName>Late endosomal/lysosomal adaptor and MAPK and MTOR activator 3</fullName>
    </alternativeName>
</protein>
<accession>Q5R3Z6</accession>
<sequence length="124" mass="13639">MADDLKRFLYKKLPSVEGLHAIVVSDRDGVPVIKVANDNAPEHALRPGFLSTFALATDQGSKLGLSKNKSTICYYNTYQVVQFNRLPLVVSFIASSSANTGLIVSLEKELAPLFEELRRVVEVS</sequence>
<keyword id="KW-0967">Endosome</keyword>
<keyword id="KW-0472">Membrane</keyword>
<keyword id="KW-1185">Reference proteome</keyword>
<evidence type="ECO:0000250" key="1"/>
<evidence type="ECO:0000250" key="2">
    <source>
        <dbReference type="UniProtKB" id="O88653"/>
    </source>
</evidence>
<evidence type="ECO:0000250" key="3">
    <source>
        <dbReference type="UniProtKB" id="Q9UHA4"/>
    </source>
</evidence>
<evidence type="ECO:0000305" key="4"/>
<comment type="function">
    <text evidence="2 3">As part of the Ragulator complex it is involved in amino acid sensing and activation of mTORC1, a signaling complex promoting cell growth in response to growth factors, energy levels, and amino acids. Activated by amino acids through a mechanism involving the lysosomal V-ATPase, the Ragulator plays a dual role for the small GTPases Rag (RagA/RRAGA, RagB/RRAGB, RagC/RRAGC and/or RagD/RRAGD): it (1) acts as a guanine nucleotide exchange factor (GEF), activating the small GTPases Rag and (2) mediates recruitment of Rag GTPases to the lysosome membrane. Activated Ragulator and Rag GTPases function as a scaffold recruiting mTORC1 to lysosomes where it is in turn activated (By similarity). Adapter protein that enhances the efficiency of the MAP kinase cascade facilitating the activation of MAPK2 (By similarity).</text>
</comment>
<comment type="subunit">
    <text evidence="2 3">Part of the Ragulator complex composed of LAMTOR1, LAMTOR2, LAMTOR3, LAMTOR4 and LAMTOR5. LAMTOR4 and LAMTOR5 form a heterodimer that interacts, through LAMTOR1, with a LAMTOR2, LAMTOR3 heterodimer. Interacts with LAMTOR1 and LAMTOR2; the interaction is direct. The Ragulator complex interacts with both the mTORC1 complex and heterodimers constituted of the Rag GTPases RagA/RRAGA, RagB/RRAGB, RagC/RRAGC and RagD/RRAGD; regulated by amino acid availability. The Ragulator complex interacts with SLC38A9; the probable amino acid sensor. Component of the lysosomal folliculin complex (LFC), composed of FLCN, FNIP1 (or FNIP2), RagA/RRAGA or RagB/RRAGB GDP-bound, RagC/RRAGC or RagD/RRAGD GTP-bound, and Ragulator (By similarity). Interacts with MAP2K1/MEK1 and MAPK2 (By similarity). Interacts with MORG1 (By similarity).</text>
</comment>
<comment type="subcellular location">
    <subcellularLocation>
        <location evidence="2">Late endosome membrane</location>
        <topology evidence="2">Peripheral membrane protein</topology>
        <orientation evidence="2">Cytoplasmic side</orientation>
    </subcellularLocation>
    <text evidence="2">Recruited to lysosome and endosome membranes by LAMTOR1.</text>
</comment>
<comment type="similarity">
    <text evidence="4">Belongs to the LAMTOR3 family.</text>
</comment>
<dbReference type="EMBL" id="CR861464">
    <property type="protein sequence ID" value="CAH93520.1"/>
    <property type="molecule type" value="mRNA"/>
</dbReference>
<dbReference type="RefSeq" id="NP_001127674.1">
    <property type="nucleotide sequence ID" value="NM_001134202.1"/>
</dbReference>
<dbReference type="SMR" id="Q5R3Z6"/>
<dbReference type="STRING" id="9601.ENSPPYP00000016698"/>
<dbReference type="GeneID" id="100174756"/>
<dbReference type="KEGG" id="pon:100174756"/>
<dbReference type="CTD" id="8649"/>
<dbReference type="eggNOG" id="ENOG502RYGZ">
    <property type="taxonomic scope" value="Eukaryota"/>
</dbReference>
<dbReference type="InParanoid" id="Q5R3Z6"/>
<dbReference type="OrthoDB" id="343907at2759"/>
<dbReference type="Proteomes" id="UP000001595">
    <property type="component" value="Unplaced"/>
</dbReference>
<dbReference type="GO" id="GO:0031902">
    <property type="term" value="C:late endosome membrane"/>
    <property type="evidence" value="ECO:0007669"/>
    <property type="project" value="UniProtKB-SubCell"/>
</dbReference>
<dbReference type="GO" id="GO:0005765">
    <property type="term" value="C:lysosomal membrane"/>
    <property type="evidence" value="ECO:0000250"/>
    <property type="project" value="UniProtKB"/>
</dbReference>
<dbReference type="GO" id="GO:0071986">
    <property type="term" value="C:Ragulator complex"/>
    <property type="evidence" value="ECO:0000250"/>
    <property type="project" value="UniProtKB"/>
</dbReference>
<dbReference type="GO" id="GO:0071230">
    <property type="term" value="P:cellular response to amino acid stimulus"/>
    <property type="evidence" value="ECO:0000250"/>
    <property type="project" value="UniProtKB"/>
</dbReference>
<dbReference type="GO" id="GO:0032008">
    <property type="term" value="P:positive regulation of TOR signaling"/>
    <property type="evidence" value="ECO:0000250"/>
    <property type="project" value="UniProtKB"/>
</dbReference>
<dbReference type="GO" id="GO:1904263">
    <property type="term" value="P:positive regulation of TORC1 signaling"/>
    <property type="evidence" value="ECO:0000250"/>
    <property type="project" value="UniProtKB"/>
</dbReference>
<dbReference type="GO" id="GO:0008104">
    <property type="term" value="P:protein localization"/>
    <property type="evidence" value="ECO:0000250"/>
    <property type="project" value="UniProtKB"/>
</dbReference>
<dbReference type="FunFam" id="3.30.450.30:FF:000003">
    <property type="entry name" value="ragulator complex protein LAMTOR3 homolog"/>
    <property type="match status" value="1"/>
</dbReference>
<dbReference type="Gene3D" id="3.30.450.30">
    <property type="entry name" value="Dynein light chain 2a, cytoplasmic"/>
    <property type="match status" value="1"/>
</dbReference>
<dbReference type="InterPro" id="IPR015019">
    <property type="entry name" value="LAMTOR3"/>
</dbReference>
<dbReference type="PANTHER" id="PTHR13378:SF1">
    <property type="entry name" value="RAGULATOR COMPLEX PROTEIN LAMTOR3"/>
    <property type="match status" value="1"/>
</dbReference>
<dbReference type="PANTHER" id="PTHR13378">
    <property type="entry name" value="REGULATOR COMPLEX PROTEIN LAMTOR3"/>
    <property type="match status" value="1"/>
</dbReference>
<dbReference type="Pfam" id="PF08923">
    <property type="entry name" value="MAPKK1_Int"/>
    <property type="match status" value="1"/>
</dbReference>
<dbReference type="SMART" id="SM01278">
    <property type="entry name" value="MAPKK1_Int"/>
    <property type="match status" value="1"/>
</dbReference>
<dbReference type="SUPFAM" id="SSF103196">
    <property type="entry name" value="Roadblock/LC7 domain"/>
    <property type="match status" value="1"/>
</dbReference>
<name>LTOR3_PONAB</name>
<proteinExistence type="evidence at transcript level"/>
<reference key="1">
    <citation type="submission" date="2004-11" db="EMBL/GenBank/DDBJ databases">
        <authorList>
            <consortium name="The German cDNA consortium"/>
        </authorList>
    </citation>
    <scope>NUCLEOTIDE SEQUENCE [LARGE SCALE MRNA]</scope>
    <source>
        <tissue>Brain cortex</tissue>
    </source>
</reference>
<organism>
    <name type="scientific">Pongo abelii</name>
    <name type="common">Sumatran orangutan</name>
    <name type="synonym">Pongo pygmaeus abelii</name>
    <dbReference type="NCBI Taxonomy" id="9601"/>
    <lineage>
        <taxon>Eukaryota</taxon>
        <taxon>Metazoa</taxon>
        <taxon>Chordata</taxon>
        <taxon>Craniata</taxon>
        <taxon>Vertebrata</taxon>
        <taxon>Euteleostomi</taxon>
        <taxon>Mammalia</taxon>
        <taxon>Eutheria</taxon>
        <taxon>Euarchontoglires</taxon>
        <taxon>Primates</taxon>
        <taxon>Haplorrhini</taxon>
        <taxon>Catarrhini</taxon>
        <taxon>Hominidae</taxon>
        <taxon>Pongo</taxon>
    </lineage>
</organism>
<feature type="chain" id="PRO_0000240657" description="Ragulator complex protein LAMTOR3">
    <location>
        <begin position="1"/>
        <end position="124"/>
    </location>
</feature>
<feature type="region of interest" description="Required for interaction with LAMTOR2" evidence="1">
    <location>
        <begin position="57"/>
        <end position="70"/>
    </location>
</feature>